<dbReference type="EMBL" id="AB015981">
    <property type="protein sequence ID" value="BAA35099.1"/>
    <property type="molecule type" value="Genomic_DNA"/>
</dbReference>
<dbReference type="EMBL" id="DQ659238">
    <property type="protein sequence ID" value="ABG67114.1"/>
    <property type="molecule type" value="Genomic_DNA"/>
</dbReference>
<dbReference type="PIR" id="E89861">
    <property type="entry name" value="E89861"/>
</dbReference>
<dbReference type="RefSeq" id="WP_000290674.1">
    <property type="nucleotide sequence ID" value="NZ_WYDB01000003.1"/>
</dbReference>
<dbReference type="SMR" id="P60690"/>
<dbReference type="TCDB" id="2.A.63.1.3">
    <property type="family name" value="the monovalent cation (k(+) or na(+)):proton antiporter-3 (cpa3) family"/>
</dbReference>
<dbReference type="OMA" id="LYIHAMD"/>
<dbReference type="GO" id="GO:0005886">
    <property type="term" value="C:plasma membrane"/>
    <property type="evidence" value="ECO:0007669"/>
    <property type="project" value="UniProtKB-SubCell"/>
</dbReference>
<dbReference type="GO" id="GO:0015297">
    <property type="term" value="F:antiporter activity"/>
    <property type="evidence" value="ECO:0007669"/>
    <property type="project" value="UniProtKB-KW"/>
</dbReference>
<dbReference type="GO" id="GO:0008324">
    <property type="term" value="F:monoatomic cation transmembrane transporter activity"/>
    <property type="evidence" value="ECO:0007669"/>
    <property type="project" value="InterPro"/>
</dbReference>
<dbReference type="GO" id="GO:1902600">
    <property type="term" value="P:proton transmembrane transport"/>
    <property type="evidence" value="ECO:0007669"/>
    <property type="project" value="UniProtKB-KW"/>
</dbReference>
<dbReference type="GO" id="GO:0006814">
    <property type="term" value="P:sodium ion transport"/>
    <property type="evidence" value="ECO:0007669"/>
    <property type="project" value="UniProtKB-KW"/>
</dbReference>
<dbReference type="InterPro" id="IPR004847">
    <property type="entry name" value="Antiport_suE1"/>
</dbReference>
<dbReference type="InterPro" id="IPR002758">
    <property type="entry name" value="Cation_antiport_E"/>
</dbReference>
<dbReference type="NCBIfam" id="TIGR00942">
    <property type="entry name" value="2a6301s05"/>
    <property type="match status" value="1"/>
</dbReference>
<dbReference type="NCBIfam" id="NF009291">
    <property type="entry name" value="PRK12651.1-1"/>
    <property type="match status" value="1"/>
</dbReference>
<dbReference type="PANTHER" id="PTHR34584">
    <property type="entry name" value="NA(+)/H(+) ANTIPORTER SUBUNIT E1"/>
    <property type="match status" value="1"/>
</dbReference>
<dbReference type="PANTHER" id="PTHR34584:SF1">
    <property type="entry name" value="NA(+)_H(+) ANTIPORTER SUBUNIT E1"/>
    <property type="match status" value="1"/>
</dbReference>
<dbReference type="Pfam" id="PF01899">
    <property type="entry name" value="MNHE"/>
    <property type="match status" value="1"/>
</dbReference>
<dbReference type="PIRSF" id="PIRSF019239">
    <property type="entry name" value="MrpE"/>
    <property type="match status" value="1"/>
</dbReference>
<protein>
    <recommendedName>
        <fullName>Na(+)/H(+) antiporter subunit E1</fullName>
    </recommendedName>
    <alternativeName>
        <fullName>Mnh complex subunit E1</fullName>
    </alternativeName>
    <alternativeName>
        <fullName>Mrp complex subunit E1</fullName>
    </alternativeName>
</protein>
<organism>
    <name type="scientific">Staphylococcus aureus</name>
    <dbReference type="NCBI Taxonomy" id="1280"/>
    <lineage>
        <taxon>Bacteria</taxon>
        <taxon>Bacillati</taxon>
        <taxon>Bacillota</taxon>
        <taxon>Bacilli</taxon>
        <taxon>Bacillales</taxon>
        <taxon>Staphylococcaceae</taxon>
        <taxon>Staphylococcus</taxon>
    </lineage>
</organism>
<sequence length="159" mass="18319">MAVQLVLNFIIAVFWLFVTNSYTTNNFVLGFIFGLVLVYLLHRVLPGRFYVITLYRIIKLVIIFLIELIKANFDVLKIIIKPSIKNEPGFFVYHTDLKKDWQIVLLSNLITLTPGTVVLGVSDDRTKIYIHAIDFSTKEQEVESIKTSLEKIVREVGEI</sequence>
<gene>
    <name type="primary">mnhE1</name>
    <name type="synonym">mrpE1</name>
</gene>
<accession>P60690</accession>
<accession>Q0Q2K3</accession>
<accession>Q9ZNG2</accession>
<feature type="chain" id="PRO_0000217091" description="Na(+)/H(+) antiporter subunit E1">
    <location>
        <begin position="1"/>
        <end position="159"/>
    </location>
</feature>
<feature type="transmembrane region" description="Helical" evidence="1">
    <location>
        <begin position="5"/>
        <end position="22"/>
    </location>
</feature>
<feature type="transmembrane region" description="Helical" evidence="1">
    <location>
        <begin position="27"/>
        <end position="45"/>
    </location>
</feature>
<feature type="transmembrane region" description="Helical" evidence="1">
    <location>
        <begin position="52"/>
        <end position="69"/>
    </location>
</feature>
<feature type="transmembrane region" description="Helical" evidence="1">
    <location>
        <begin position="100"/>
        <end position="122"/>
    </location>
</feature>
<name>MNHE1_STAAU</name>
<keyword id="KW-0050">Antiport</keyword>
<keyword id="KW-1003">Cell membrane</keyword>
<keyword id="KW-0375">Hydrogen ion transport</keyword>
<keyword id="KW-0406">Ion transport</keyword>
<keyword id="KW-0472">Membrane</keyword>
<keyword id="KW-0915">Sodium</keyword>
<keyword id="KW-0739">Sodium transport</keyword>
<keyword id="KW-0812">Transmembrane</keyword>
<keyword id="KW-1133">Transmembrane helix</keyword>
<keyword id="KW-0813">Transport</keyword>
<reference key="1">
    <citation type="journal article" date="1998" name="J. Bacteriol.">
        <title>A putative multisubunit Na+/H+ antiporter from Staphylococcus aureus.</title>
        <authorList>
            <person name="Hiramatsu T."/>
            <person name="Kodama K."/>
            <person name="Kuroda T."/>
            <person name="Mizushima T."/>
            <person name="Tsuchiya T."/>
        </authorList>
    </citation>
    <scope>NUCLEOTIDE SEQUENCE [GENOMIC DNA]</scope>
    <scope>CHARACTERIZATION OF ANTIPORTER ACTIVITY</scope>
    <source>
        <strain>ATCC 21027 / 209-P</strain>
    </source>
</reference>
<reference key="2">
    <citation type="journal article" date="2007" name="J. Bacteriol.">
        <title>Catalytic properties of Staphylococcus aureus and Bacillus members of the secondary cation/proton antiporter-3 (Mrp) family are revealed by an optimized assay in an Escherichia coli host.</title>
        <authorList>
            <person name="Swartz T.H."/>
            <person name="Ito M."/>
            <person name="Ohira T."/>
            <person name="Natsui S."/>
            <person name="Hicks D.B."/>
            <person name="Krulwich T.A."/>
        </authorList>
    </citation>
    <scope>NUCLEOTIDE SEQUENCE [GENOMIC DNA]</scope>
    <scope>CHARACTERIZATION</scope>
    <scope>PROBABLE ELECTROGENIC ANTIPORTER ACTIVITY</scope>
    <source>
        <strain>RF4220</strain>
    </source>
</reference>
<proteinExistence type="evidence at protein level"/>
<evidence type="ECO:0000255" key="1"/>
<evidence type="ECO:0000305" key="2"/>
<comment type="function">
    <text>Mnh complex is a Na(+)Li(+)/H(+) antiporter involved in Na(+) and/or Li(+) excretion. Na(+)/H(+) antiport consumes a transmembrane electrical potential, and is thus inferred to be electrogenic. Does not transport K(+), Ca(2+) or Mg(2+).</text>
</comment>
<comment type="activity regulation">
    <text>Na(+) extrusion is completely inhibited by the H(+) conductor carbonyl cyanide m-chlorophenylhydrazone (CCCP).</text>
</comment>
<comment type="subunit">
    <text>May form a heterooligomeric complex that consists of seven subunits: mnhA1, mnhB1, mnhC1, mnhD1, mnhE1, mnhF1 and mnhG1.</text>
</comment>
<comment type="subcellular location">
    <subcellularLocation>
        <location evidence="2">Cell membrane</location>
        <topology evidence="2">Multi-pass membrane protein</topology>
    </subcellularLocation>
</comment>
<comment type="similarity">
    <text evidence="2">Belongs to the CPA3 antiporters (TC 2.A.63) subunit E family.</text>
</comment>